<sequence>MNPKTYIPDTFIEMIREIMPEHLSMDEFIASCRTPLRRSIRVNTLKISVEDFLVRVSDKDWTLTPVPWCDTGFWIEREDEKSVSLGNTAEHMAGLFYIQEASSMMPVTALLKNNDALDCVLDMASAPGSKTTQIACAMQNRGVLVANELAASRIKVLHANLQRCGVYNAALTHFDGCVFGGWAPESFDTILLDAPCSGEGAIRKDGDAMANWSLSSIEDIAAIQRNLIISAFQALKTGGMMVYSTCTLNLSENQHVCHFLKETFGDAVEFEPLGDLFEGAEKSLTEDGFLHVYPQIFDSEGFFVARIRKHAAVETPKVKKRMGKFPFTIVADADKAIIAEQLQATLSITLPAESDVWVREKEVWLFPANLRPLIGEIRFQRMGVKLAEQHKKGYRWQHEAVMTLATGKEDVAIDLAPEQAKEWFMGRDIRPENLLGKGEVVVTYRDYPIGIGKWVGNRIKNGLPRELVRDTNLFDI</sequence>
<keyword id="KW-0963">Cytoplasm</keyword>
<keyword id="KW-0489">Methyltransferase</keyword>
<keyword id="KW-1185">Reference proteome</keyword>
<keyword id="KW-0694">RNA-binding</keyword>
<keyword id="KW-0698">rRNA processing</keyword>
<keyword id="KW-0949">S-adenosyl-L-methionine</keyword>
<keyword id="KW-0808">Transferase</keyword>
<dbReference type="EC" id="2.1.1.178" evidence="1"/>
<dbReference type="EMBL" id="CR378669">
    <property type="protein sequence ID" value="CAG20331.1"/>
    <property type="status" value="ALT_INIT"/>
    <property type="molecule type" value="Genomic_DNA"/>
</dbReference>
<dbReference type="RefSeq" id="WP_041394298.1">
    <property type="nucleotide sequence ID" value="NC_006370.1"/>
</dbReference>
<dbReference type="SMR" id="Q6LQU5"/>
<dbReference type="STRING" id="298386.PBPRA1927"/>
<dbReference type="KEGG" id="ppr:PBPRA1927"/>
<dbReference type="eggNOG" id="COG0144">
    <property type="taxonomic scope" value="Bacteria"/>
</dbReference>
<dbReference type="eggNOG" id="COG3270">
    <property type="taxonomic scope" value="Bacteria"/>
</dbReference>
<dbReference type="HOGENOM" id="CLU_005316_6_2_6"/>
<dbReference type="Proteomes" id="UP000000593">
    <property type="component" value="Chromosome 1"/>
</dbReference>
<dbReference type="GO" id="GO:0005737">
    <property type="term" value="C:cytoplasm"/>
    <property type="evidence" value="ECO:0007669"/>
    <property type="project" value="UniProtKB-SubCell"/>
</dbReference>
<dbReference type="GO" id="GO:0003723">
    <property type="term" value="F:RNA binding"/>
    <property type="evidence" value="ECO:0007669"/>
    <property type="project" value="UniProtKB-KW"/>
</dbReference>
<dbReference type="GO" id="GO:0009383">
    <property type="term" value="F:rRNA (cytosine-C5-)-methyltransferase activity"/>
    <property type="evidence" value="ECO:0007669"/>
    <property type="project" value="TreeGrafter"/>
</dbReference>
<dbReference type="GO" id="GO:0070475">
    <property type="term" value="P:rRNA base methylation"/>
    <property type="evidence" value="ECO:0007669"/>
    <property type="project" value="TreeGrafter"/>
</dbReference>
<dbReference type="Gene3D" id="3.10.450.720">
    <property type="match status" value="1"/>
</dbReference>
<dbReference type="Gene3D" id="3.40.50.150">
    <property type="entry name" value="Vaccinia Virus protein VP39"/>
    <property type="match status" value="1"/>
</dbReference>
<dbReference type="HAMAP" id="MF_01579">
    <property type="entry name" value="16SrRNA_methyltr_F"/>
    <property type="match status" value="1"/>
</dbReference>
<dbReference type="InterPro" id="IPR031341">
    <property type="entry name" value="Methyltr_RsmF_N"/>
</dbReference>
<dbReference type="InterPro" id="IPR049560">
    <property type="entry name" value="MeTrfase_RsmB-F_NOP2_cat"/>
</dbReference>
<dbReference type="InterPro" id="IPR001678">
    <property type="entry name" value="MeTrfase_RsmB-F_NOP2_dom"/>
</dbReference>
<dbReference type="InterPro" id="IPR027391">
    <property type="entry name" value="Nol1_Nop2_Fmu_2"/>
</dbReference>
<dbReference type="InterPro" id="IPR011023">
    <property type="entry name" value="Nop2p"/>
</dbReference>
<dbReference type="InterPro" id="IPR023267">
    <property type="entry name" value="RCMT"/>
</dbReference>
<dbReference type="InterPro" id="IPR023545">
    <property type="entry name" value="rRNA_ssu_MeTfrase_F"/>
</dbReference>
<dbReference type="InterPro" id="IPR029063">
    <property type="entry name" value="SAM-dependent_MTases_sf"/>
</dbReference>
<dbReference type="InterPro" id="IPR048457">
    <property type="entry name" value="YebU_pre-PUA_dom"/>
</dbReference>
<dbReference type="NCBIfam" id="TIGR00446">
    <property type="entry name" value="nop2p"/>
    <property type="match status" value="1"/>
</dbReference>
<dbReference type="NCBIfam" id="NF008898">
    <property type="entry name" value="PRK11933.1"/>
    <property type="match status" value="1"/>
</dbReference>
<dbReference type="PANTHER" id="PTHR22807:SF30">
    <property type="entry name" value="28S RRNA (CYTOSINE(4447)-C(5))-METHYLTRANSFERASE-RELATED"/>
    <property type="match status" value="1"/>
</dbReference>
<dbReference type="PANTHER" id="PTHR22807">
    <property type="entry name" value="NOP2 YEAST -RELATED NOL1/NOP2/FMU SUN DOMAIN-CONTAINING"/>
    <property type="match status" value="1"/>
</dbReference>
<dbReference type="Pfam" id="PF01189">
    <property type="entry name" value="Methyltr_RsmB-F"/>
    <property type="match status" value="1"/>
</dbReference>
<dbReference type="Pfam" id="PF17125">
    <property type="entry name" value="Methyltr_RsmF_N"/>
    <property type="match status" value="1"/>
</dbReference>
<dbReference type="Pfam" id="PF13636">
    <property type="entry name" value="Methyltranf_PUA"/>
    <property type="match status" value="1"/>
</dbReference>
<dbReference type="Pfam" id="PF21150">
    <property type="entry name" value="YebU_pre-PUA_dom"/>
    <property type="match status" value="1"/>
</dbReference>
<dbReference type="PRINTS" id="PR02008">
    <property type="entry name" value="RCMTFAMILY"/>
</dbReference>
<dbReference type="SUPFAM" id="SSF53335">
    <property type="entry name" value="S-adenosyl-L-methionine-dependent methyltransferases"/>
    <property type="match status" value="1"/>
</dbReference>
<dbReference type="PROSITE" id="PS51686">
    <property type="entry name" value="SAM_MT_RSMB_NOP"/>
    <property type="match status" value="1"/>
</dbReference>
<name>RSMF_PHOPR</name>
<proteinExistence type="inferred from homology"/>
<reference key="1">
    <citation type="journal article" date="2005" name="Science">
        <title>Life at depth: Photobacterium profundum genome sequence and expression analysis.</title>
        <authorList>
            <person name="Vezzi A."/>
            <person name="Campanaro S."/>
            <person name="D'Angelo M."/>
            <person name="Simonato F."/>
            <person name="Vitulo N."/>
            <person name="Lauro F.M."/>
            <person name="Cestaro A."/>
            <person name="Malacrida G."/>
            <person name="Simionati B."/>
            <person name="Cannata N."/>
            <person name="Romualdi C."/>
            <person name="Bartlett D.H."/>
            <person name="Valle G."/>
        </authorList>
    </citation>
    <scope>NUCLEOTIDE SEQUENCE [LARGE SCALE GENOMIC DNA]</scope>
    <source>
        <strain>ATCC BAA-1253 / SS9</strain>
    </source>
</reference>
<feature type="chain" id="PRO_0000285002" description="Ribosomal RNA small subunit methyltransferase F">
    <location>
        <begin position="1"/>
        <end position="476"/>
    </location>
</feature>
<feature type="active site" description="Nucleophile" evidence="1">
    <location>
        <position position="246"/>
    </location>
</feature>
<feature type="binding site" evidence="1">
    <location>
        <begin position="124"/>
        <end position="130"/>
    </location>
    <ligand>
        <name>S-adenosyl-L-methionine</name>
        <dbReference type="ChEBI" id="CHEBI:59789"/>
    </ligand>
</feature>
<feature type="binding site" evidence="1">
    <location>
        <position position="148"/>
    </location>
    <ligand>
        <name>S-adenosyl-L-methionine</name>
        <dbReference type="ChEBI" id="CHEBI:59789"/>
    </ligand>
</feature>
<feature type="binding site" evidence="1">
    <location>
        <position position="175"/>
    </location>
    <ligand>
        <name>S-adenosyl-L-methionine</name>
        <dbReference type="ChEBI" id="CHEBI:59789"/>
    </ligand>
</feature>
<feature type="binding site" evidence="1">
    <location>
        <position position="193"/>
    </location>
    <ligand>
        <name>S-adenosyl-L-methionine</name>
        <dbReference type="ChEBI" id="CHEBI:59789"/>
    </ligand>
</feature>
<evidence type="ECO:0000255" key="1">
    <source>
        <dbReference type="HAMAP-Rule" id="MF_01579"/>
    </source>
</evidence>
<evidence type="ECO:0000305" key="2"/>
<accession>Q6LQU5</accession>
<comment type="function">
    <text evidence="1">Specifically methylates the cytosine at position 1407 (m5C1407) of 16S rRNA.</text>
</comment>
<comment type="catalytic activity">
    <reaction evidence="1">
        <text>cytidine(1407) in 16S rRNA + S-adenosyl-L-methionine = 5-methylcytidine(1407) in 16S rRNA + S-adenosyl-L-homocysteine + H(+)</text>
        <dbReference type="Rhea" id="RHEA:42756"/>
        <dbReference type="Rhea" id="RHEA-COMP:10223"/>
        <dbReference type="Rhea" id="RHEA-COMP:10224"/>
        <dbReference type="ChEBI" id="CHEBI:15378"/>
        <dbReference type="ChEBI" id="CHEBI:57856"/>
        <dbReference type="ChEBI" id="CHEBI:59789"/>
        <dbReference type="ChEBI" id="CHEBI:74483"/>
        <dbReference type="ChEBI" id="CHEBI:82748"/>
        <dbReference type="EC" id="2.1.1.178"/>
    </reaction>
</comment>
<comment type="subcellular location">
    <subcellularLocation>
        <location evidence="1">Cytoplasm</location>
    </subcellularLocation>
</comment>
<comment type="similarity">
    <text evidence="1">Belongs to the class I-like SAM-binding methyltransferase superfamily. RsmB/NOP family.</text>
</comment>
<comment type="sequence caution" evidence="2">
    <conflict type="erroneous initiation">
        <sequence resource="EMBL-CDS" id="CAG20331"/>
    </conflict>
</comment>
<protein>
    <recommendedName>
        <fullName evidence="1">Ribosomal RNA small subunit methyltransferase F</fullName>
        <ecNumber evidence="1">2.1.1.178</ecNumber>
    </recommendedName>
    <alternativeName>
        <fullName evidence="1">16S rRNA m5C1407 methyltransferase</fullName>
    </alternativeName>
    <alternativeName>
        <fullName evidence="1">rRNA (cytosine-C(5)-)-methyltransferase RsmF</fullName>
    </alternativeName>
</protein>
<gene>
    <name evidence="1" type="primary">rsmF</name>
    <name type="ordered locus">PBPRA1927</name>
</gene>
<organism>
    <name type="scientific">Photobacterium profundum (strain SS9)</name>
    <dbReference type="NCBI Taxonomy" id="298386"/>
    <lineage>
        <taxon>Bacteria</taxon>
        <taxon>Pseudomonadati</taxon>
        <taxon>Pseudomonadota</taxon>
        <taxon>Gammaproteobacteria</taxon>
        <taxon>Vibrionales</taxon>
        <taxon>Vibrionaceae</taxon>
        <taxon>Photobacterium</taxon>
    </lineage>
</organism>